<gene>
    <name evidence="2" type="primary">hemF2</name>
    <name type="ordered locus">all1357</name>
</gene>
<accession>Q8YX58</accession>
<protein>
    <recommendedName>
        <fullName>Coproporphyrinogen-III oxidase, aerobic 2</fullName>
        <shortName evidence="2">Coprogen oxidase 2</shortName>
        <shortName evidence="2">Coproporphyrinogenase 2</shortName>
        <ecNumber evidence="2">1.3.3.3</ecNumber>
    </recommendedName>
</protein>
<feature type="chain" id="PRO_0000109881" description="Coproporphyrinogen-III oxidase, aerobic 2">
    <location>
        <begin position="1"/>
        <end position="347"/>
    </location>
</feature>
<feature type="region of interest" description="Disordered" evidence="3">
    <location>
        <begin position="1"/>
        <end position="31"/>
    </location>
</feature>
<feature type="region of interest" description="Important for dimerization" evidence="2">
    <location>
        <begin position="75"/>
        <end position="84"/>
    </location>
</feature>
<feature type="region of interest" description="Important for dimerization" evidence="2">
    <location>
        <begin position="287"/>
        <end position="322"/>
    </location>
</feature>
<feature type="compositionally biased region" description="Polar residues" evidence="3">
    <location>
        <begin position="7"/>
        <end position="31"/>
    </location>
</feature>
<feature type="active site" description="Proton donor" evidence="2">
    <location>
        <position position="133"/>
    </location>
</feature>
<feature type="binding site" evidence="2">
    <location>
        <position position="119"/>
    </location>
    <ligand>
        <name>substrate</name>
    </ligand>
</feature>
<feature type="binding site" evidence="2">
    <location>
        <begin position="135"/>
        <end position="137"/>
    </location>
    <ligand>
        <name>substrate</name>
    </ligand>
</feature>
<feature type="binding site" evidence="2">
    <location>
        <begin position="305"/>
        <end position="310"/>
    </location>
    <ligand>
        <name>substrate</name>
    </ligand>
</feature>
<feature type="site" description="Important for dimerization" evidence="2">
    <location>
        <position position="197"/>
    </location>
</feature>
<comment type="function">
    <text evidence="1">Key enzyme in heme biosynthesis. Catalyzes the oxidative decarboxylation of propionic acid side chains of rings A and B of coproporphyrinogen III (By similarity).</text>
</comment>
<comment type="catalytic activity">
    <reaction evidence="2">
        <text>coproporphyrinogen III + O2 + 2 H(+) = protoporphyrinogen IX + 2 CO2 + 2 H2O</text>
        <dbReference type="Rhea" id="RHEA:18257"/>
        <dbReference type="ChEBI" id="CHEBI:15377"/>
        <dbReference type="ChEBI" id="CHEBI:15378"/>
        <dbReference type="ChEBI" id="CHEBI:15379"/>
        <dbReference type="ChEBI" id="CHEBI:16526"/>
        <dbReference type="ChEBI" id="CHEBI:57307"/>
        <dbReference type="ChEBI" id="CHEBI:57309"/>
        <dbReference type="EC" id="1.3.3.3"/>
    </reaction>
</comment>
<comment type="pathway">
    <text evidence="2">Porphyrin-containing compound metabolism; protoporphyrin-IX biosynthesis; protoporphyrinogen-IX from coproporphyrinogen-III (O2 route): step 1/1.</text>
</comment>
<comment type="subunit">
    <text evidence="2">Homodimer.</text>
</comment>
<comment type="subcellular location">
    <subcellularLocation>
        <location evidence="2">Cytoplasm</location>
    </subcellularLocation>
</comment>
<comment type="similarity">
    <text evidence="2">Belongs to the aerobic coproporphyrinogen-III oxidase family.</text>
</comment>
<proteinExistence type="inferred from homology"/>
<evidence type="ECO:0000250" key="1"/>
<evidence type="ECO:0000255" key="2">
    <source>
        <dbReference type="HAMAP-Rule" id="MF_00333"/>
    </source>
</evidence>
<evidence type="ECO:0000256" key="3">
    <source>
        <dbReference type="SAM" id="MobiDB-lite"/>
    </source>
</evidence>
<reference key="1">
    <citation type="journal article" date="2001" name="DNA Res.">
        <title>Complete genomic sequence of the filamentous nitrogen-fixing cyanobacterium Anabaena sp. strain PCC 7120.</title>
        <authorList>
            <person name="Kaneko T."/>
            <person name="Nakamura Y."/>
            <person name="Wolk C.P."/>
            <person name="Kuritz T."/>
            <person name="Sasamoto S."/>
            <person name="Watanabe A."/>
            <person name="Iriguchi M."/>
            <person name="Ishikawa A."/>
            <person name="Kawashima K."/>
            <person name="Kimura T."/>
            <person name="Kishida Y."/>
            <person name="Kohara M."/>
            <person name="Matsumoto M."/>
            <person name="Matsuno A."/>
            <person name="Muraki A."/>
            <person name="Nakazaki N."/>
            <person name="Shimpo S."/>
            <person name="Sugimoto M."/>
            <person name="Takazawa M."/>
            <person name="Yamada M."/>
            <person name="Yasuda M."/>
            <person name="Tabata S."/>
        </authorList>
    </citation>
    <scope>NUCLEOTIDE SEQUENCE [LARGE SCALE GENOMIC DNA]</scope>
    <source>
        <strain>PCC 7120 / SAG 25.82 / UTEX 2576</strain>
    </source>
</reference>
<dbReference type="EC" id="1.3.3.3" evidence="2"/>
<dbReference type="EMBL" id="BA000019">
    <property type="protein sequence ID" value="BAB73314.1"/>
    <property type="molecule type" value="Genomic_DNA"/>
</dbReference>
<dbReference type="PIR" id="AB1976">
    <property type="entry name" value="AB1976"/>
</dbReference>
<dbReference type="RefSeq" id="WP_010995529.1">
    <property type="nucleotide sequence ID" value="NC_003272.1"/>
</dbReference>
<dbReference type="SMR" id="Q8YX58"/>
<dbReference type="STRING" id="103690.gene:10493372"/>
<dbReference type="KEGG" id="ana:all1357"/>
<dbReference type="eggNOG" id="COG0408">
    <property type="taxonomic scope" value="Bacteria"/>
</dbReference>
<dbReference type="OrthoDB" id="9777553at2"/>
<dbReference type="UniPathway" id="UPA00251">
    <property type="reaction ID" value="UER00322"/>
</dbReference>
<dbReference type="Proteomes" id="UP000002483">
    <property type="component" value="Chromosome"/>
</dbReference>
<dbReference type="GO" id="GO:0005737">
    <property type="term" value="C:cytoplasm"/>
    <property type="evidence" value="ECO:0007669"/>
    <property type="project" value="UniProtKB-SubCell"/>
</dbReference>
<dbReference type="GO" id="GO:0004109">
    <property type="term" value="F:coproporphyrinogen oxidase activity"/>
    <property type="evidence" value="ECO:0007669"/>
    <property type="project" value="UniProtKB-UniRule"/>
</dbReference>
<dbReference type="GO" id="GO:0042803">
    <property type="term" value="F:protein homodimerization activity"/>
    <property type="evidence" value="ECO:0000250"/>
    <property type="project" value="UniProtKB"/>
</dbReference>
<dbReference type="GO" id="GO:0015995">
    <property type="term" value="P:chlorophyll biosynthetic process"/>
    <property type="evidence" value="ECO:0007669"/>
    <property type="project" value="UniProtKB-UniRule"/>
</dbReference>
<dbReference type="GO" id="GO:0006782">
    <property type="term" value="P:protoporphyrinogen IX biosynthetic process"/>
    <property type="evidence" value="ECO:0007669"/>
    <property type="project" value="UniProtKB-UniRule"/>
</dbReference>
<dbReference type="FunFam" id="3.40.1500.10:FF:000007">
    <property type="entry name" value="Oxygen-dependent coproporphyrinogen-III oxidase"/>
    <property type="match status" value="1"/>
</dbReference>
<dbReference type="Gene3D" id="3.40.1500.10">
    <property type="entry name" value="Coproporphyrinogen III oxidase, aerobic"/>
    <property type="match status" value="1"/>
</dbReference>
<dbReference type="HAMAP" id="MF_00333">
    <property type="entry name" value="Coprogen_oxidas"/>
    <property type="match status" value="1"/>
</dbReference>
<dbReference type="InterPro" id="IPR001260">
    <property type="entry name" value="Coprogen_oxidase_aer"/>
</dbReference>
<dbReference type="InterPro" id="IPR036406">
    <property type="entry name" value="Coprogen_oxidase_aer_sf"/>
</dbReference>
<dbReference type="InterPro" id="IPR018375">
    <property type="entry name" value="Coprogen_oxidase_CS"/>
</dbReference>
<dbReference type="NCBIfam" id="NF003727">
    <property type="entry name" value="PRK05330.1"/>
    <property type="match status" value="1"/>
</dbReference>
<dbReference type="PANTHER" id="PTHR10755">
    <property type="entry name" value="COPROPORPHYRINOGEN III OXIDASE, MITOCHONDRIAL"/>
    <property type="match status" value="1"/>
</dbReference>
<dbReference type="PANTHER" id="PTHR10755:SF0">
    <property type="entry name" value="OXYGEN-DEPENDENT COPROPORPHYRINOGEN-III OXIDASE, MITOCHONDRIAL"/>
    <property type="match status" value="1"/>
</dbReference>
<dbReference type="Pfam" id="PF01218">
    <property type="entry name" value="Coprogen_oxidas"/>
    <property type="match status" value="1"/>
</dbReference>
<dbReference type="PIRSF" id="PIRSF000166">
    <property type="entry name" value="Coproporphyri_ox"/>
    <property type="match status" value="1"/>
</dbReference>
<dbReference type="PRINTS" id="PR00073">
    <property type="entry name" value="COPRGNOXDASE"/>
</dbReference>
<dbReference type="SUPFAM" id="SSF102886">
    <property type="entry name" value="Coproporphyrinogen III oxidase"/>
    <property type="match status" value="1"/>
</dbReference>
<dbReference type="PROSITE" id="PS01021">
    <property type="entry name" value="COPROGEN_OXIDASE"/>
    <property type="match status" value="1"/>
</dbReference>
<name>HEM62_NOSS1</name>
<organism>
    <name type="scientific">Nostoc sp. (strain PCC 7120 / SAG 25.82 / UTEX 2576)</name>
    <dbReference type="NCBI Taxonomy" id="103690"/>
    <lineage>
        <taxon>Bacteria</taxon>
        <taxon>Bacillati</taxon>
        <taxon>Cyanobacteriota</taxon>
        <taxon>Cyanophyceae</taxon>
        <taxon>Nostocales</taxon>
        <taxon>Nostocaceae</taxon>
        <taxon>Nostoc</taxon>
    </lineage>
</organism>
<sequence length="347" mass="40031">MGRHSDNSLQESANHTVLLTSPTNTIPKDSRQRSQQFMQNLQDEICTALEQLDGKASFHQDHWERAEGGEGRTRVIREGRVFEQGGVNFSAVWGNSLPASILAQRPEAAGHEFFATGTSMVLHPRNPYVPTVHLNYRYFEAGPIWWFGGGADLTPYYAFKEDAVHFHQTLKNACDVHNPEYYPTFKRWCDEYFYLRHREEQRGIGGIFFDYQDASGKLYVESQTDSSVAIYSQKVGNVARNWEDIFAFVQSCGQAFLPAYLPIVERRQGIEYGDRQRNFQLYRRGRYVEFNLVYDRGTVFGLQTKGRTESILMSLPPLARWEYCYEPEAGSPEAELTEVFLQPRDWV</sequence>
<keyword id="KW-0963">Cytoplasm</keyword>
<keyword id="KW-0560">Oxidoreductase</keyword>
<keyword id="KW-0627">Porphyrin biosynthesis</keyword>
<keyword id="KW-1185">Reference proteome</keyword>